<dbReference type="EC" id="3.1.26.3" evidence="1"/>
<dbReference type="EMBL" id="BA000003">
    <property type="protein sequence ID" value="BAB12968.1"/>
    <property type="molecule type" value="Genomic_DNA"/>
</dbReference>
<dbReference type="RefSeq" id="NP_240082.1">
    <property type="nucleotide sequence ID" value="NC_002528.1"/>
</dbReference>
<dbReference type="RefSeq" id="WP_009874212.1">
    <property type="nucleotide sequence ID" value="NZ_AP036055.1"/>
</dbReference>
<dbReference type="SMR" id="P57346"/>
<dbReference type="STRING" id="563178.BUAP5A_253"/>
<dbReference type="EnsemblBacteria" id="BAB12968">
    <property type="protein sequence ID" value="BAB12968"/>
    <property type="gene ID" value="BAB12968"/>
</dbReference>
<dbReference type="KEGG" id="buc:BU258"/>
<dbReference type="PATRIC" id="fig|107806.10.peg.268"/>
<dbReference type="eggNOG" id="COG0571">
    <property type="taxonomic scope" value="Bacteria"/>
</dbReference>
<dbReference type="HOGENOM" id="CLU_000907_1_1_6"/>
<dbReference type="Proteomes" id="UP000001806">
    <property type="component" value="Chromosome"/>
</dbReference>
<dbReference type="GO" id="GO:0005737">
    <property type="term" value="C:cytoplasm"/>
    <property type="evidence" value="ECO:0007669"/>
    <property type="project" value="UniProtKB-SubCell"/>
</dbReference>
<dbReference type="GO" id="GO:0003725">
    <property type="term" value="F:double-stranded RNA binding"/>
    <property type="evidence" value="ECO:0007669"/>
    <property type="project" value="TreeGrafter"/>
</dbReference>
<dbReference type="GO" id="GO:0046872">
    <property type="term" value="F:metal ion binding"/>
    <property type="evidence" value="ECO:0007669"/>
    <property type="project" value="UniProtKB-KW"/>
</dbReference>
<dbReference type="GO" id="GO:0004525">
    <property type="term" value="F:ribonuclease III activity"/>
    <property type="evidence" value="ECO:0007669"/>
    <property type="project" value="UniProtKB-UniRule"/>
</dbReference>
<dbReference type="GO" id="GO:0019843">
    <property type="term" value="F:rRNA binding"/>
    <property type="evidence" value="ECO:0007669"/>
    <property type="project" value="UniProtKB-KW"/>
</dbReference>
<dbReference type="GO" id="GO:0006397">
    <property type="term" value="P:mRNA processing"/>
    <property type="evidence" value="ECO:0007669"/>
    <property type="project" value="UniProtKB-UniRule"/>
</dbReference>
<dbReference type="GO" id="GO:0010468">
    <property type="term" value="P:regulation of gene expression"/>
    <property type="evidence" value="ECO:0007669"/>
    <property type="project" value="TreeGrafter"/>
</dbReference>
<dbReference type="GO" id="GO:0006364">
    <property type="term" value="P:rRNA processing"/>
    <property type="evidence" value="ECO:0007669"/>
    <property type="project" value="UniProtKB-UniRule"/>
</dbReference>
<dbReference type="GO" id="GO:0008033">
    <property type="term" value="P:tRNA processing"/>
    <property type="evidence" value="ECO:0007669"/>
    <property type="project" value="UniProtKB-KW"/>
</dbReference>
<dbReference type="CDD" id="cd10845">
    <property type="entry name" value="DSRM_RNAse_III_family"/>
    <property type="match status" value="1"/>
</dbReference>
<dbReference type="CDD" id="cd00593">
    <property type="entry name" value="RIBOc"/>
    <property type="match status" value="1"/>
</dbReference>
<dbReference type="FunFam" id="1.10.1520.10:FF:000001">
    <property type="entry name" value="Ribonuclease 3"/>
    <property type="match status" value="1"/>
</dbReference>
<dbReference type="FunFam" id="3.30.160.20:FF:000003">
    <property type="entry name" value="Ribonuclease 3"/>
    <property type="match status" value="1"/>
</dbReference>
<dbReference type="Gene3D" id="3.30.160.20">
    <property type="match status" value="1"/>
</dbReference>
<dbReference type="Gene3D" id="1.10.1520.10">
    <property type="entry name" value="Ribonuclease III domain"/>
    <property type="match status" value="1"/>
</dbReference>
<dbReference type="HAMAP" id="MF_00104">
    <property type="entry name" value="RNase_III"/>
    <property type="match status" value="1"/>
</dbReference>
<dbReference type="InterPro" id="IPR014720">
    <property type="entry name" value="dsRBD_dom"/>
</dbReference>
<dbReference type="InterPro" id="IPR011907">
    <property type="entry name" value="RNase_III"/>
</dbReference>
<dbReference type="InterPro" id="IPR000999">
    <property type="entry name" value="RNase_III_dom"/>
</dbReference>
<dbReference type="InterPro" id="IPR036389">
    <property type="entry name" value="RNase_III_sf"/>
</dbReference>
<dbReference type="NCBIfam" id="TIGR02191">
    <property type="entry name" value="RNaseIII"/>
    <property type="match status" value="1"/>
</dbReference>
<dbReference type="PANTHER" id="PTHR11207:SF0">
    <property type="entry name" value="RIBONUCLEASE 3"/>
    <property type="match status" value="1"/>
</dbReference>
<dbReference type="PANTHER" id="PTHR11207">
    <property type="entry name" value="RIBONUCLEASE III"/>
    <property type="match status" value="1"/>
</dbReference>
<dbReference type="Pfam" id="PF00035">
    <property type="entry name" value="dsrm"/>
    <property type="match status" value="1"/>
</dbReference>
<dbReference type="Pfam" id="PF14622">
    <property type="entry name" value="Ribonucleas_3_3"/>
    <property type="match status" value="1"/>
</dbReference>
<dbReference type="SMART" id="SM00358">
    <property type="entry name" value="DSRM"/>
    <property type="match status" value="1"/>
</dbReference>
<dbReference type="SMART" id="SM00535">
    <property type="entry name" value="RIBOc"/>
    <property type="match status" value="1"/>
</dbReference>
<dbReference type="SUPFAM" id="SSF54768">
    <property type="entry name" value="dsRNA-binding domain-like"/>
    <property type="match status" value="1"/>
</dbReference>
<dbReference type="SUPFAM" id="SSF69065">
    <property type="entry name" value="RNase III domain-like"/>
    <property type="match status" value="1"/>
</dbReference>
<dbReference type="PROSITE" id="PS50137">
    <property type="entry name" value="DS_RBD"/>
    <property type="match status" value="1"/>
</dbReference>
<dbReference type="PROSITE" id="PS00517">
    <property type="entry name" value="RNASE_3_1"/>
    <property type="match status" value="1"/>
</dbReference>
<dbReference type="PROSITE" id="PS50142">
    <property type="entry name" value="RNASE_3_2"/>
    <property type="match status" value="1"/>
</dbReference>
<protein>
    <recommendedName>
        <fullName evidence="1">Ribonuclease 3</fullName>
        <ecNumber evidence="1">3.1.26.3</ecNumber>
    </recommendedName>
    <alternativeName>
        <fullName evidence="1">Ribonuclease III</fullName>
        <shortName evidence="1">RNase III</shortName>
    </alternativeName>
</protein>
<proteinExistence type="inferred from homology"/>
<name>RNC_BUCAI</name>
<sequence length="226" mass="25738">MNHIVTKKIQKVLGYTFTHKDLLKQALTHRSASSKHNERLEFLGDSILSFVIANALYQHFPYIDEGDMSRMRATLVRGNTLAEIAYEFDLGEYLKLGQGELKSGGFRRESILANTVEALIGSIYLDSNIKTVEELILKWYEKRLEKISPGDTQKDPKTRLQEYLQSKHLSLPLYFIVEVYGEAHNQLFTIHCKISTISEYLIGTGSSRRKAEQDAAQKALIKLGVE</sequence>
<keyword id="KW-0963">Cytoplasm</keyword>
<keyword id="KW-0255">Endonuclease</keyword>
<keyword id="KW-0378">Hydrolase</keyword>
<keyword id="KW-0460">Magnesium</keyword>
<keyword id="KW-0479">Metal-binding</keyword>
<keyword id="KW-0507">mRNA processing</keyword>
<keyword id="KW-0540">Nuclease</keyword>
<keyword id="KW-1185">Reference proteome</keyword>
<keyword id="KW-0694">RNA-binding</keyword>
<keyword id="KW-0698">rRNA processing</keyword>
<keyword id="KW-0699">rRNA-binding</keyword>
<keyword id="KW-0819">tRNA processing</keyword>
<comment type="function">
    <text evidence="1">Digests double-stranded RNA. Involved in the processing of primary rRNA transcript to yield the immediate precursors to the large and small rRNAs (23S and 16S). Processes some mRNAs, and tRNAs when they are encoded in the rRNA operon. Processes pre-crRNA and tracrRNA of type II CRISPR loci if present in the organism.</text>
</comment>
<comment type="catalytic activity">
    <reaction evidence="1">
        <text>Endonucleolytic cleavage to 5'-phosphomonoester.</text>
        <dbReference type="EC" id="3.1.26.3"/>
    </reaction>
</comment>
<comment type="cofactor">
    <cofactor evidence="1">
        <name>Mg(2+)</name>
        <dbReference type="ChEBI" id="CHEBI:18420"/>
    </cofactor>
</comment>
<comment type="subunit">
    <text evidence="1">Homodimer.</text>
</comment>
<comment type="subcellular location">
    <subcellularLocation>
        <location evidence="1">Cytoplasm</location>
    </subcellularLocation>
</comment>
<comment type="similarity">
    <text evidence="1">Belongs to the ribonuclease III family.</text>
</comment>
<gene>
    <name evidence="1" type="primary">rnc</name>
    <name type="ordered locus">BU258</name>
</gene>
<organism>
    <name type="scientific">Buchnera aphidicola subsp. Acyrthosiphon pisum (strain APS)</name>
    <name type="common">Acyrthosiphon pisum symbiotic bacterium</name>
    <dbReference type="NCBI Taxonomy" id="107806"/>
    <lineage>
        <taxon>Bacteria</taxon>
        <taxon>Pseudomonadati</taxon>
        <taxon>Pseudomonadota</taxon>
        <taxon>Gammaproteobacteria</taxon>
        <taxon>Enterobacterales</taxon>
        <taxon>Erwiniaceae</taxon>
        <taxon>Buchnera</taxon>
    </lineage>
</organism>
<feature type="chain" id="PRO_0000180380" description="Ribonuclease 3">
    <location>
        <begin position="1"/>
        <end position="226"/>
    </location>
</feature>
<feature type="domain" description="RNase III" evidence="1">
    <location>
        <begin position="6"/>
        <end position="128"/>
    </location>
</feature>
<feature type="domain" description="DRBM" evidence="1">
    <location>
        <begin position="155"/>
        <end position="225"/>
    </location>
</feature>
<feature type="active site" evidence="1">
    <location>
        <position position="45"/>
    </location>
</feature>
<feature type="active site" evidence="1">
    <location>
        <position position="117"/>
    </location>
</feature>
<feature type="binding site" evidence="1">
    <location>
        <position position="41"/>
    </location>
    <ligand>
        <name>Mg(2+)</name>
        <dbReference type="ChEBI" id="CHEBI:18420"/>
    </ligand>
</feature>
<feature type="binding site" evidence="1">
    <location>
        <position position="114"/>
    </location>
    <ligand>
        <name>Mg(2+)</name>
        <dbReference type="ChEBI" id="CHEBI:18420"/>
    </ligand>
</feature>
<feature type="binding site" evidence="1">
    <location>
        <position position="117"/>
    </location>
    <ligand>
        <name>Mg(2+)</name>
        <dbReference type="ChEBI" id="CHEBI:18420"/>
    </ligand>
</feature>
<evidence type="ECO:0000255" key="1">
    <source>
        <dbReference type="HAMAP-Rule" id="MF_00104"/>
    </source>
</evidence>
<accession>P57346</accession>
<reference key="1">
    <citation type="journal article" date="2000" name="Nature">
        <title>Genome sequence of the endocellular bacterial symbiont of aphids Buchnera sp. APS.</title>
        <authorList>
            <person name="Shigenobu S."/>
            <person name="Watanabe H."/>
            <person name="Hattori M."/>
            <person name="Sakaki Y."/>
            <person name="Ishikawa H."/>
        </authorList>
    </citation>
    <scope>NUCLEOTIDE SEQUENCE [LARGE SCALE GENOMIC DNA]</scope>
    <source>
        <strain>APS</strain>
    </source>
</reference>